<evidence type="ECO:0000303" key="1">
    <source>
    </source>
</evidence>
<evidence type="ECO:0000305" key="2"/>
<sequence length="37" mass="4197">DHGESFQMLESGRQMGMNVISAKYNLVTSQTRDSSYK</sequence>
<comment type="caution">
    <text evidence="2">The order of the peptides shown is unknown.</text>
</comment>
<organism>
    <name type="scientific">Pseudotsuga menziesii</name>
    <name type="common">Douglas-fir</name>
    <name type="synonym">Abies menziesii</name>
    <dbReference type="NCBI Taxonomy" id="3357"/>
    <lineage>
        <taxon>Eukaryota</taxon>
        <taxon>Viridiplantae</taxon>
        <taxon>Streptophyta</taxon>
        <taxon>Embryophyta</taxon>
        <taxon>Tracheophyta</taxon>
        <taxon>Spermatophyta</taxon>
        <taxon>Pinopsida</taxon>
        <taxon>Pinidae</taxon>
        <taxon>Conifers I</taxon>
        <taxon>Pinales</taxon>
        <taxon>Pinaceae</taxon>
        <taxon>Pseudotsuga</taxon>
    </lineage>
</organism>
<protein>
    <recommendedName>
        <fullName>Unknown protein 25</fullName>
    </recommendedName>
</protein>
<feature type="chain" id="PRO_0000347312" description="Unknown protein 25">
    <location>
        <begin position="1" status="less than"/>
        <end position="37"/>
    </location>
</feature>
<feature type="non-consecutive residues" evidence="1">
    <location>
        <begin position="13"/>
        <end position="14"/>
    </location>
</feature>
<feature type="non-consecutive residues" evidence="1">
    <location>
        <begin position="23"/>
        <end position="24"/>
    </location>
</feature>
<feature type="non-terminal residue" evidence="1">
    <location>
        <position position="1"/>
    </location>
</feature>
<feature type="non-terminal residue" evidence="1">
    <location>
        <position position="37"/>
    </location>
</feature>
<accession>P85952</accession>
<reference key="1">
    <citation type="journal article" date="2008" name="J. Proteomics">
        <title>A proteomics approach to identify proteins differentially expressed in Douglas-fir seedlings infected by Phellinus sulphurascens.</title>
        <authorList>
            <person name="Islam M.A."/>
            <person name="Sturrock R.N."/>
            <person name="Ekramoddoullah A.K.M."/>
        </authorList>
    </citation>
    <scope>IDENTIFICATION BY MASS SPECTROMETRY</scope>
</reference>
<proteinExistence type="evidence at protein level"/>
<name>UP25_PSEMZ</name>